<accession>A0KRY5</accession>
<protein>
    <recommendedName>
        <fullName evidence="1">UPF0761 membrane protein Shewana3_0311</fullName>
    </recommendedName>
</protein>
<proteinExistence type="inferred from homology"/>
<sequence>MTKKIELAQIQVLFLGIWRFLLHLRQRLVEDQINIRAGHLAYVTLLSLVPMVAVTMSMLSAFPVFKGIRGQIEAFVYENFLPAAGDTVQVYINEFVGNASKGTAVGIAALVVVAIMLISAIDKSLNNIWRTKEKRSVVVAFSMYWMVITLGPVLVGASLVATSYVVSLKLFEGDALSGVMPLFIERLPMLFSVAAFLLLYMVVPNQKVKFWHALLGAVVAALLFELGKKGFALYVTKFPSYEAIYGALATIPILFVWVYLSWMIVLLGAEITAAMPEYLDYESSSNINETNLDGEPLAAQNTPAVEPETISAQSSQEVDTMGELAANAPQSTTLDKP</sequence>
<evidence type="ECO:0000255" key="1">
    <source>
        <dbReference type="HAMAP-Rule" id="MF_00672"/>
    </source>
</evidence>
<evidence type="ECO:0000256" key="2">
    <source>
        <dbReference type="SAM" id="MobiDB-lite"/>
    </source>
</evidence>
<keyword id="KW-0997">Cell inner membrane</keyword>
<keyword id="KW-1003">Cell membrane</keyword>
<keyword id="KW-0472">Membrane</keyword>
<keyword id="KW-0812">Transmembrane</keyword>
<keyword id="KW-1133">Transmembrane helix</keyword>
<gene>
    <name type="ordered locus">Shewana3_0311</name>
</gene>
<organism>
    <name type="scientific">Shewanella sp. (strain ANA-3)</name>
    <dbReference type="NCBI Taxonomy" id="94122"/>
    <lineage>
        <taxon>Bacteria</taxon>
        <taxon>Pseudomonadati</taxon>
        <taxon>Pseudomonadota</taxon>
        <taxon>Gammaproteobacteria</taxon>
        <taxon>Alteromonadales</taxon>
        <taxon>Shewanellaceae</taxon>
        <taxon>Shewanella</taxon>
    </lineage>
</organism>
<reference key="1">
    <citation type="submission" date="2006-09" db="EMBL/GenBank/DDBJ databases">
        <title>Complete sequence of chromosome 1 of Shewanella sp. ANA-3.</title>
        <authorList>
            <person name="Copeland A."/>
            <person name="Lucas S."/>
            <person name="Lapidus A."/>
            <person name="Barry K."/>
            <person name="Detter J.C."/>
            <person name="Glavina del Rio T."/>
            <person name="Hammon N."/>
            <person name="Israni S."/>
            <person name="Dalin E."/>
            <person name="Tice H."/>
            <person name="Pitluck S."/>
            <person name="Chertkov O."/>
            <person name="Brettin T."/>
            <person name="Bruce D."/>
            <person name="Han C."/>
            <person name="Tapia R."/>
            <person name="Gilna P."/>
            <person name="Schmutz J."/>
            <person name="Larimer F."/>
            <person name="Land M."/>
            <person name="Hauser L."/>
            <person name="Kyrpides N."/>
            <person name="Kim E."/>
            <person name="Newman D."/>
            <person name="Salticov C."/>
            <person name="Konstantinidis K."/>
            <person name="Klappenback J."/>
            <person name="Tiedje J."/>
            <person name="Richardson P."/>
        </authorList>
    </citation>
    <scope>NUCLEOTIDE SEQUENCE [LARGE SCALE GENOMIC DNA]</scope>
    <source>
        <strain>ANA-3</strain>
    </source>
</reference>
<comment type="subcellular location">
    <subcellularLocation>
        <location evidence="1">Cell inner membrane</location>
        <topology evidence="1">Multi-pass membrane protein</topology>
    </subcellularLocation>
</comment>
<comment type="similarity">
    <text evidence="1">Belongs to the UPF0761 family.</text>
</comment>
<name>Y311_SHESA</name>
<dbReference type="EMBL" id="CP000469">
    <property type="protein sequence ID" value="ABK46554.1"/>
    <property type="molecule type" value="Genomic_DNA"/>
</dbReference>
<dbReference type="RefSeq" id="WP_011715543.1">
    <property type="nucleotide sequence ID" value="NC_008577.1"/>
</dbReference>
<dbReference type="STRING" id="94122.Shewana3_0311"/>
<dbReference type="KEGG" id="shn:Shewana3_0311"/>
<dbReference type="eggNOG" id="COG1295">
    <property type="taxonomic scope" value="Bacteria"/>
</dbReference>
<dbReference type="HOGENOM" id="CLU_032288_0_0_6"/>
<dbReference type="OrthoDB" id="9808671at2"/>
<dbReference type="Proteomes" id="UP000002589">
    <property type="component" value="Chromosome"/>
</dbReference>
<dbReference type="GO" id="GO:0005886">
    <property type="term" value="C:plasma membrane"/>
    <property type="evidence" value="ECO:0007669"/>
    <property type="project" value="UniProtKB-SubCell"/>
</dbReference>
<dbReference type="HAMAP" id="MF_00672">
    <property type="entry name" value="UPF0761"/>
    <property type="match status" value="1"/>
</dbReference>
<dbReference type="InterPro" id="IPR023679">
    <property type="entry name" value="UPF0761_bac"/>
</dbReference>
<dbReference type="InterPro" id="IPR017039">
    <property type="entry name" value="Virul_fac_BrkB"/>
</dbReference>
<dbReference type="NCBIfam" id="NF002457">
    <property type="entry name" value="PRK01637.1"/>
    <property type="match status" value="1"/>
</dbReference>
<dbReference type="NCBIfam" id="TIGR00765">
    <property type="entry name" value="yihY_not_rbn"/>
    <property type="match status" value="1"/>
</dbReference>
<dbReference type="PANTHER" id="PTHR30213">
    <property type="entry name" value="INNER MEMBRANE PROTEIN YHJD"/>
    <property type="match status" value="1"/>
</dbReference>
<dbReference type="PANTHER" id="PTHR30213:SF0">
    <property type="entry name" value="UPF0761 MEMBRANE PROTEIN YIHY"/>
    <property type="match status" value="1"/>
</dbReference>
<dbReference type="Pfam" id="PF03631">
    <property type="entry name" value="Virul_fac_BrkB"/>
    <property type="match status" value="1"/>
</dbReference>
<feature type="chain" id="PRO_1000044728" description="UPF0761 membrane protein Shewana3_0311">
    <location>
        <begin position="1"/>
        <end position="337"/>
    </location>
</feature>
<feature type="transmembrane region" description="Helical" evidence="1">
    <location>
        <begin position="4"/>
        <end position="24"/>
    </location>
</feature>
<feature type="transmembrane region" description="Helical" evidence="1">
    <location>
        <begin position="45"/>
        <end position="65"/>
    </location>
</feature>
<feature type="transmembrane region" description="Helical" evidence="1">
    <location>
        <begin position="102"/>
        <end position="122"/>
    </location>
</feature>
<feature type="transmembrane region" description="Helical" evidence="1">
    <location>
        <begin position="137"/>
        <end position="157"/>
    </location>
</feature>
<feature type="transmembrane region" description="Helical" evidence="1">
    <location>
        <begin position="183"/>
        <end position="203"/>
    </location>
</feature>
<feature type="transmembrane region" description="Helical" evidence="1">
    <location>
        <begin position="213"/>
        <end position="233"/>
    </location>
</feature>
<feature type="transmembrane region" description="Helical" evidence="1">
    <location>
        <begin position="247"/>
        <end position="267"/>
    </location>
</feature>
<feature type="region of interest" description="Disordered" evidence="2">
    <location>
        <begin position="292"/>
        <end position="337"/>
    </location>
</feature>
<feature type="compositionally biased region" description="Polar residues" evidence="2">
    <location>
        <begin position="328"/>
        <end position="337"/>
    </location>
</feature>